<feature type="transit peptide" description="Chloroplast" evidence="1">
    <location>
        <begin position="1"/>
        <end status="unknown"/>
    </location>
</feature>
<feature type="chain" id="PRO_0000331537" description="Probable anion transporter 4, chloroplastic">
    <location>
        <begin status="unknown"/>
        <end position="533"/>
    </location>
</feature>
<feature type="transmembrane region" description="Helical" evidence="1">
    <location>
        <begin position="117"/>
        <end position="137"/>
    </location>
</feature>
<feature type="transmembrane region" description="Helical" evidence="1">
    <location>
        <begin position="152"/>
        <end position="172"/>
    </location>
</feature>
<feature type="transmembrane region" description="Helical" evidence="1">
    <location>
        <begin position="179"/>
        <end position="199"/>
    </location>
</feature>
<feature type="transmembrane region" description="Helical" evidence="1">
    <location>
        <begin position="203"/>
        <end position="223"/>
    </location>
</feature>
<feature type="transmembrane region" description="Helical" evidence="1">
    <location>
        <begin position="243"/>
        <end position="263"/>
    </location>
</feature>
<feature type="transmembrane region" description="Helical" evidence="1">
    <location>
        <begin position="267"/>
        <end position="287"/>
    </location>
</feature>
<feature type="transmembrane region" description="Helical" evidence="1">
    <location>
        <begin position="342"/>
        <end position="362"/>
    </location>
</feature>
<feature type="transmembrane region" description="Helical" evidence="1">
    <location>
        <begin position="376"/>
        <end position="396"/>
    </location>
</feature>
<feature type="transmembrane region" description="Helical" evidence="1">
    <location>
        <begin position="417"/>
        <end position="437"/>
    </location>
</feature>
<feature type="transmembrane region" description="Helical" evidence="1">
    <location>
        <begin position="438"/>
        <end position="458"/>
    </location>
</feature>
<feature type="transmembrane region" description="Helical" evidence="1">
    <location>
        <begin position="474"/>
        <end position="494"/>
    </location>
</feature>
<feature type="transmembrane region" description="Helical" evidence="1">
    <location>
        <begin position="502"/>
        <end position="522"/>
    </location>
</feature>
<feature type="splice variant" id="VSP_033254" description="In isoform 2." evidence="5">
    <original>EIAPEYSG</original>
    <variation>VPKRVIHT</variation>
    <location>
        <begin position="462"/>
        <end position="469"/>
    </location>
</feature>
<feature type="splice variant" id="VSP_033255" description="In isoform 2." evidence="5">
    <location>
        <begin position="470"/>
        <end position="533"/>
    </location>
</feature>
<feature type="splice variant" id="VSP_041590" description="In isoform 3." evidence="4">
    <original>A</original>
    <variation>AA</variation>
    <location>
        <position position="533"/>
    </location>
</feature>
<feature type="sequence conflict" description="In Ref. 3; AAL32520." evidence="5" ref="3">
    <original>P</original>
    <variation>T</variation>
    <location>
        <position position="234"/>
    </location>
</feature>
<name>ANTR4_ARATH</name>
<dbReference type="EMBL" id="AL133292">
    <property type="protein sequence ID" value="CAB61944.1"/>
    <property type="status" value="ALT_SEQ"/>
    <property type="molecule type" value="Genomic_DNA"/>
</dbReference>
<dbReference type="EMBL" id="CP002686">
    <property type="protein sequence ID" value="AEE78226.1"/>
    <property type="molecule type" value="Genomic_DNA"/>
</dbReference>
<dbReference type="EMBL" id="CP002686">
    <property type="protein sequence ID" value="AEE78228.1"/>
    <property type="molecule type" value="Genomic_DNA"/>
</dbReference>
<dbReference type="EMBL" id="AY062442">
    <property type="protein sequence ID" value="AAL32520.1"/>
    <property type="molecule type" value="mRNA"/>
</dbReference>
<dbReference type="EMBL" id="BT015413">
    <property type="protein sequence ID" value="AAU05536.1"/>
    <property type="molecule type" value="mRNA"/>
</dbReference>
<dbReference type="EMBL" id="AK222020">
    <property type="protein sequence ID" value="BAD94691.1"/>
    <property type="status" value="ALT_INIT"/>
    <property type="molecule type" value="mRNA"/>
</dbReference>
<dbReference type="PIR" id="T45634">
    <property type="entry name" value="T45634"/>
</dbReference>
<dbReference type="RefSeq" id="NP_001030824.1">
    <molecule id="Q66GI9-3"/>
    <property type="nucleotide sequence ID" value="NM_001035747.2"/>
</dbReference>
<dbReference type="RefSeq" id="NP_190282.2">
    <molecule id="Q66GI9-1"/>
    <property type="nucleotide sequence ID" value="NM_114565.3"/>
</dbReference>
<dbReference type="SMR" id="Q66GI9"/>
<dbReference type="BioGRID" id="9171">
    <property type="interactions" value="2"/>
</dbReference>
<dbReference type="FunCoup" id="Q66GI9">
    <property type="interactions" value="587"/>
</dbReference>
<dbReference type="STRING" id="3702.Q66GI9"/>
<dbReference type="PaxDb" id="3702-AT3G46980.3"/>
<dbReference type="ProteomicsDB" id="240596">
    <molecule id="Q66GI9-1"/>
</dbReference>
<dbReference type="EnsemblPlants" id="AT3G46980.1">
    <molecule id="Q66GI9-1"/>
    <property type="protein sequence ID" value="AT3G46980.1"/>
    <property type="gene ID" value="AT3G46980"/>
</dbReference>
<dbReference type="EnsemblPlants" id="AT3G46980.3">
    <molecule id="Q66GI9-3"/>
    <property type="protein sequence ID" value="AT3G46980.3"/>
    <property type="gene ID" value="AT3G46980"/>
</dbReference>
<dbReference type="GeneID" id="823851"/>
<dbReference type="Gramene" id="AT3G46980.1">
    <molecule id="Q66GI9-1"/>
    <property type="protein sequence ID" value="AT3G46980.1"/>
    <property type="gene ID" value="AT3G46980"/>
</dbReference>
<dbReference type="Gramene" id="AT3G46980.3">
    <molecule id="Q66GI9-3"/>
    <property type="protein sequence ID" value="AT3G46980.3"/>
    <property type="gene ID" value="AT3G46980"/>
</dbReference>
<dbReference type="KEGG" id="ath:AT3G46980"/>
<dbReference type="Araport" id="AT3G46980"/>
<dbReference type="TAIR" id="AT3G46980">
    <property type="gene designation" value="PHT4"/>
</dbReference>
<dbReference type="eggNOG" id="KOG2532">
    <property type="taxonomic scope" value="Eukaryota"/>
</dbReference>
<dbReference type="HOGENOM" id="CLU_001265_5_11_1"/>
<dbReference type="InParanoid" id="Q66GI9"/>
<dbReference type="OMA" id="FYKHPKD"/>
<dbReference type="PhylomeDB" id="Q66GI9"/>
<dbReference type="PRO" id="PR:Q66GI9"/>
<dbReference type="Proteomes" id="UP000006548">
    <property type="component" value="Chromosome 3"/>
</dbReference>
<dbReference type="ExpressionAtlas" id="Q66GI9">
    <property type="expression patterns" value="baseline and differential"/>
</dbReference>
<dbReference type="GO" id="GO:0031969">
    <property type="term" value="C:chloroplast membrane"/>
    <property type="evidence" value="ECO:0007669"/>
    <property type="project" value="UniProtKB-SubCell"/>
</dbReference>
<dbReference type="GO" id="GO:0005315">
    <property type="term" value="F:phosphate transmembrane transporter activity"/>
    <property type="evidence" value="ECO:0000314"/>
    <property type="project" value="TAIR"/>
</dbReference>
<dbReference type="CDD" id="cd17380">
    <property type="entry name" value="MFS_SLC17A9_like"/>
    <property type="match status" value="1"/>
</dbReference>
<dbReference type="FunFam" id="1.20.1250.20:FF:000131">
    <property type="entry name" value="Probable anion transporter 3, chloroplastic"/>
    <property type="match status" value="1"/>
</dbReference>
<dbReference type="FunFam" id="1.20.1250.20:FF:000142">
    <property type="entry name" value="probable anion transporter 3, chloroplastic"/>
    <property type="match status" value="1"/>
</dbReference>
<dbReference type="Gene3D" id="1.20.1250.20">
    <property type="entry name" value="MFS general substrate transporter like domains"/>
    <property type="match status" value="2"/>
</dbReference>
<dbReference type="InterPro" id="IPR011701">
    <property type="entry name" value="MFS"/>
</dbReference>
<dbReference type="InterPro" id="IPR020846">
    <property type="entry name" value="MFS_dom"/>
</dbReference>
<dbReference type="InterPro" id="IPR050382">
    <property type="entry name" value="MFS_Na/Anion_cotransporter"/>
</dbReference>
<dbReference type="InterPro" id="IPR036259">
    <property type="entry name" value="MFS_trans_sf"/>
</dbReference>
<dbReference type="InterPro" id="IPR044777">
    <property type="entry name" value="SLC17A9-like"/>
</dbReference>
<dbReference type="PANTHER" id="PTHR11662:SF424">
    <property type="entry name" value="ANION TRANSPORTER 4, CHLOROPLASTIC-RELATED"/>
    <property type="match status" value="1"/>
</dbReference>
<dbReference type="PANTHER" id="PTHR11662">
    <property type="entry name" value="SOLUTE CARRIER FAMILY 17"/>
    <property type="match status" value="1"/>
</dbReference>
<dbReference type="Pfam" id="PF07690">
    <property type="entry name" value="MFS_1"/>
    <property type="match status" value="1"/>
</dbReference>
<dbReference type="SUPFAM" id="SSF103473">
    <property type="entry name" value="MFS general substrate transporter"/>
    <property type="match status" value="1"/>
</dbReference>
<dbReference type="PROSITE" id="PS50850">
    <property type="entry name" value="MFS"/>
    <property type="match status" value="1"/>
</dbReference>
<sequence>MCYSLSIQSSIDFHNRNALKIHGDRAILTSNLPTLRRIPFLPERDRRRKLVLCTGRVVNSLKFTGNTSVDLCGIPRHRLRVSCSDARRTPEETAAELTAQPNFSEFITSERVKVVAMLALALALCNADRVVMSVAIVPLSLSRGWSKSFSGIVQSSFLWGYLISPIAGGTLVDRYGGKVVMAWGVALWSLATFLTPWAADSSLWALLAARAMVGVAEGVALPCMNNMVARWFPPTERSRAVGIAMAGFQLGNVVGLMLSPILMSQGGIYGPFVIFGLSGFLWLLVWLSATSSAPDRHPQITKSELEYIKQKKQISTMENKRISTSGIPPFGRLLSKMPTWAVIVANSMHSWGFFVILSWMPIYFNSVYHVNLKQAAWFSAVPWSMMAFTGYIAGFWSDLLIRRGTSITLTRKIMQSIGFIGPGIALIGLTTAKQPLVASAWLSLAVGLKSFSHLGFLINLQEIAPEYSGVLHGMCLTAGTLAAIVGTVGAGFFVELLGSFQGFILLTAILYLLSALFYNIYATGERVDFDTTA</sequence>
<evidence type="ECO:0000255" key="1"/>
<evidence type="ECO:0000269" key="2">
    <source>
    </source>
</evidence>
<evidence type="ECO:0000269" key="3">
    <source>
    </source>
</evidence>
<evidence type="ECO:0000303" key="4">
    <source ref="5"/>
</evidence>
<evidence type="ECO:0000305" key="5"/>
<reference key="1">
    <citation type="journal article" date="2000" name="Nature">
        <title>Sequence and analysis of chromosome 3 of the plant Arabidopsis thaliana.</title>
        <authorList>
            <person name="Salanoubat M."/>
            <person name="Lemcke K."/>
            <person name="Rieger M."/>
            <person name="Ansorge W."/>
            <person name="Unseld M."/>
            <person name="Fartmann B."/>
            <person name="Valle G."/>
            <person name="Bloecker H."/>
            <person name="Perez-Alonso M."/>
            <person name="Obermaier B."/>
            <person name="Delseny M."/>
            <person name="Boutry M."/>
            <person name="Grivell L.A."/>
            <person name="Mache R."/>
            <person name="Puigdomenech P."/>
            <person name="De Simone V."/>
            <person name="Choisne N."/>
            <person name="Artiguenave F."/>
            <person name="Robert C."/>
            <person name="Brottier P."/>
            <person name="Wincker P."/>
            <person name="Cattolico L."/>
            <person name="Weissenbach J."/>
            <person name="Saurin W."/>
            <person name="Quetier F."/>
            <person name="Schaefer M."/>
            <person name="Mueller-Auer S."/>
            <person name="Gabel C."/>
            <person name="Fuchs M."/>
            <person name="Benes V."/>
            <person name="Wurmbach E."/>
            <person name="Drzonek H."/>
            <person name="Erfle H."/>
            <person name="Jordan N."/>
            <person name="Bangert S."/>
            <person name="Wiedelmann R."/>
            <person name="Kranz H."/>
            <person name="Voss H."/>
            <person name="Holland R."/>
            <person name="Brandt P."/>
            <person name="Nyakatura G."/>
            <person name="Vezzi A."/>
            <person name="D'Angelo M."/>
            <person name="Pallavicini A."/>
            <person name="Toppo S."/>
            <person name="Simionati B."/>
            <person name="Conrad A."/>
            <person name="Hornischer K."/>
            <person name="Kauer G."/>
            <person name="Loehnert T.-H."/>
            <person name="Nordsiek G."/>
            <person name="Reichelt J."/>
            <person name="Scharfe M."/>
            <person name="Schoen O."/>
            <person name="Bargues M."/>
            <person name="Terol J."/>
            <person name="Climent J."/>
            <person name="Navarro P."/>
            <person name="Collado C."/>
            <person name="Perez-Perez A."/>
            <person name="Ottenwaelder B."/>
            <person name="Duchemin D."/>
            <person name="Cooke R."/>
            <person name="Laudie M."/>
            <person name="Berger-Llauro C."/>
            <person name="Purnelle B."/>
            <person name="Masuy D."/>
            <person name="de Haan M."/>
            <person name="Maarse A.C."/>
            <person name="Alcaraz J.-P."/>
            <person name="Cottet A."/>
            <person name="Casacuberta E."/>
            <person name="Monfort A."/>
            <person name="Argiriou A."/>
            <person name="Flores M."/>
            <person name="Liguori R."/>
            <person name="Vitale D."/>
            <person name="Mannhaupt G."/>
            <person name="Haase D."/>
            <person name="Schoof H."/>
            <person name="Rudd S."/>
            <person name="Zaccaria P."/>
            <person name="Mewes H.-W."/>
            <person name="Mayer K.F.X."/>
            <person name="Kaul S."/>
            <person name="Town C.D."/>
            <person name="Koo H.L."/>
            <person name="Tallon L.J."/>
            <person name="Jenkins J."/>
            <person name="Rooney T."/>
            <person name="Rizzo M."/>
            <person name="Walts A."/>
            <person name="Utterback T."/>
            <person name="Fujii C.Y."/>
            <person name="Shea T.P."/>
            <person name="Creasy T.H."/>
            <person name="Haas B."/>
            <person name="Maiti R."/>
            <person name="Wu D."/>
            <person name="Peterson J."/>
            <person name="Van Aken S."/>
            <person name="Pai G."/>
            <person name="Militscher J."/>
            <person name="Sellers P."/>
            <person name="Gill J.E."/>
            <person name="Feldblyum T.V."/>
            <person name="Preuss D."/>
            <person name="Lin X."/>
            <person name="Nierman W.C."/>
            <person name="Salzberg S.L."/>
            <person name="White O."/>
            <person name="Venter J.C."/>
            <person name="Fraser C.M."/>
            <person name="Kaneko T."/>
            <person name="Nakamura Y."/>
            <person name="Sato S."/>
            <person name="Kato T."/>
            <person name="Asamizu E."/>
            <person name="Sasamoto S."/>
            <person name="Kimura T."/>
            <person name="Idesawa K."/>
            <person name="Kawashima K."/>
            <person name="Kishida Y."/>
            <person name="Kiyokawa C."/>
            <person name="Kohara M."/>
            <person name="Matsumoto M."/>
            <person name="Matsuno A."/>
            <person name="Muraki A."/>
            <person name="Nakayama S."/>
            <person name="Nakazaki N."/>
            <person name="Shinpo S."/>
            <person name="Takeuchi C."/>
            <person name="Wada T."/>
            <person name="Watanabe A."/>
            <person name="Yamada M."/>
            <person name="Yasuda M."/>
            <person name="Tabata S."/>
        </authorList>
    </citation>
    <scope>NUCLEOTIDE SEQUENCE [LARGE SCALE GENOMIC DNA]</scope>
    <source>
        <strain>cv. Columbia</strain>
    </source>
</reference>
<reference key="2">
    <citation type="journal article" date="2017" name="Plant J.">
        <title>Araport11: a complete reannotation of the Arabidopsis thaliana reference genome.</title>
        <authorList>
            <person name="Cheng C.Y."/>
            <person name="Krishnakumar V."/>
            <person name="Chan A.P."/>
            <person name="Thibaud-Nissen F."/>
            <person name="Schobel S."/>
            <person name="Town C.D."/>
        </authorList>
    </citation>
    <scope>GENOME REANNOTATION</scope>
    <source>
        <strain>cv. Columbia</strain>
    </source>
</reference>
<reference key="3">
    <citation type="journal article" date="2003" name="Science">
        <title>Empirical analysis of transcriptional activity in the Arabidopsis genome.</title>
        <authorList>
            <person name="Yamada K."/>
            <person name="Lim J."/>
            <person name="Dale J.M."/>
            <person name="Chen H."/>
            <person name="Shinn P."/>
            <person name="Palm C.J."/>
            <person name="Southwick A.M."/>
            <person name="Wu H.C."/>
            <person name="Kim C.J."/>
            <person name="Nguyen M."/>
            <person name="Pham P.K."/>
            <person name="Cheuk R.F."/>
            <person name="Karlin-Newmann G."/>
            <person name="Liu S.X."/>
            <person name="Lam B."/>
            <person name="Sakano H."/>
            <person name="Wu T."/>
            <person name="Yu G."/>
            <person name="Miranda M."/>
            <person name="Quach H.L."/>
            <person name="Tripp M."/>
            <person name="Chang C.H."/>
            <person name="Lee J.M."/>
            <person name="Toriumi M.J."/>
            <person name="Chan M.M."/>
            <person name="Tang C.C."/>
            <person name="Onodera C.S."/>
            <person name="Deng J.M."/>
            <person name="Akiyama K."/>
            <person name="Ansari Y."/>
            <person name="Arakawa T."/>
            <person name="Banh J."/>
            <person name="Banno F."/>
            <person name="Bowser L."/>
            <person name="Brooks S.Y."/>
            <person name="Carninci P."/>
            <person name="Chao Q."/>
            <person name="Choy N."/>
            <person name="Enju A."/>
            <person name="Goldsmith A.D."/>
            <person name="Gurjal M."/>
            <person name="Hansen N.F."/>
            <person name="Hayashizaki Y."/>
            <person name="Johnson-Hopson C."/>
            <person name="Hsuan V.W."/>
            <person name="Iida K."/>
            <person name="Karnes M."/>
            <person name="Khan S."/>
            <person name="Koesema E."/>
            <person name="Ishida J."/>
            <person name="Jiang P.X."/>
            <person name="Jones T."/>
            <person name="Kawai J."/>
            <person name="Kamiya A."/>
            <person name="Meyers C."/>
            <person name="Nakajima M."/>
            <person name="Narusaka M."/>
            <person name="Seki M."/>
            <person name="Sakurai T."/>
            <person name="Satou M."/>
            <person name="Tamse R."/>
            <person name="Vaysberg M."/>
            <person name="Wallender E.K."/>
            <person name="Wong C."/>
            <person name="Yamamura Y."/>
            <person name="Yuan S."/>
            <person name="Shinozaki K."/>
            <person name="Davis R.W."/>
            <person name="Theologis A."/>
            <person name="Ecker J.R."/>
        </authorList>
    </citation>
    <scope>NUCLEOTIDE SEQUENCE [LARGE SCALE MRNA] (ISOFORM 1)</scope>
    <source>
        <strain>cv. Columbia</strain>
    </source>
</reference>
<reference key="4">
    <citation type="submission" date="2004-08" db="EMBL/GenBank/DDBJ databases">
        <title>Arabidopsis ORF clones.</title>
        <authorList>
            <person name="Cheuk R.F."/>
            <person name="Chen H."/>
            <person name="Kim C.J."/>
            <person name="Shinn P."/>
            <person name="Ecker J.R."/>
        </authorList>
    </citation>
    <scope>NUCLEOTIDE SEQUENCE [LARGE SCALE MRNA] (ISOFORM 1)</scope>
    <source>
        <strain>cv. Columbia</strain>
    </source>
</reference>
<reference key="5">
    <citation type="submission" date="2005-03" db="EMBL/GenBank/DDBJ databases">
        <title>Large-scale analysis of RIKEN Arabidopsis full-length (RAFL) cDNAs.</title>
        <authorList>
            <person name="Totoki Y."/>
            <person name="Seki M."/>
            <person name="Ishida J."/>
            <person name="Nakajima M."/>
            <person name="Enju A."/>
            <person name="Kamiya A."/>
            <person name="Narusaka M."/>
            <person name="Shin-i T."/>
            <person name="Nakagawa M."/>
            <person name="Sakamoto N."/>
            <person name="Oishi K."/>
            <person name="Kohara Y."/>
            <person name="Kobayashi M."/>
            <person name="Toyoda A."/>
            <person name="Sakaki Y."/>
            <person name="Sakurai T."/>
            <person name="Iida K."/>
            <person name="Akiyama K."/>
            <person name="Satou M."/>
            <person name="Toyoda T."/>
            <person name="Konagaya A."/>
            <person name="Carninci P."/>
            <person name="Kawai J."/>
            <person name="Hayashizaki Y."/>
            <person name="Shinozaki K."/>
        </authorList>
    </citation>
    <scope>NUCLEOTIDE SEQUENCE [LARGE SCALE MRNA] (ISOFORM 3)</scope>
    <source>
        <strain>cv. Columbia</strain>
    </source>
</reference>
<reference key="6">
    <citation type="journal article" date="2004" name="Planta">
        <title>Characterization of a protein of the plastid inner envelope having homology to animal inorganic phosphate, chloride and organic-anion transporters.</title>
        <authorList>
            <person name="Roth C."/>
            <person name="Menzel G."/>
            <person name="Petetot J.M."/>
            <person name="Rochat-Hacker S."/>
            <person name="Poirier Y."/>
        </authorList>
    </citation>
    <scope>GENE FAMILY</scope>
    <scope>NOMENCLATURE</scope>
</reference>
<reference key="7">
    <citation type="journal article" date="2008" name="New Phytol.">
        <title>Functional analysis of the Arabidopsis PHT4 family of intracellular phosphate transporters.</title>
        <authorList>
            <person name="Guo B."/>
            <person name="Jin Y."/>
            <person name="Wussler C."/>
            <person name="Blancaflor E.B."/>
            <person name="Motes C.M."/>
            <person name="Versaw W.K."/>
        </authorList>
    </citation>
    <scope>FUNCTION</scope>
    <scope>TISSUE SPECIFICITY</scope>
</reference>
<reference key="8">
    <citation type="journal article" date="2008" name="Plant Signal. Behav.">
        <title>Differential expression and phylogenetic analysis suggest specialization of plastid-localized members of the PHT4 phosphate transporter family for photosynthetic and heterotrophic tissues.</title>
        <authorList>
            <person name="Guo B."/>
            <person name="Irigoyen S."/>
            <person name="Fowler T.B."/>
            <person name="Versaw W.K."/>
        </authorList>
    </citation>
    <scope>TISSUE SPECIFICITY</scope>
    <scope>INDUCTION</scope>
</reference>
<proteinExistence type="evidence at transcript level"/>
<accession>Q66GI9</accession>
<accession>B3H4C5</accession>
<accession>Q3EAN9</accession>
<accession>Q56WL8</accession>
<accession>Q8W4P5</accession>
<accession>Q9SD75</accession>
<organism>
    <name type="scientific">Arabidopsis thaliana</name>
    <name type="common">Mouse-ear cress</name>
    <dbReference type="NCBI Taxonomy" id="3702"/>
    <lineage>
        <taxon>Eukaryota</taxon>
        <taxon>Viridiplantae</taxon>
        <taxon>Streptophyta</taxon>
        <taxon>Embryophyta</taxon>
        <taxon>Tracheophyta</taxon>
        <taxon>Spermatophyta</taxon>
        <taxon>Magnoliopsida</taxon>
        <taxon>eudicotyledons</taxon>
        <taxon>Gunneridae</taxon>
        <taxon>Pentapetalae</taxon>
        <taxon>rosids</taxon>
        <taxon>malvids</taxon>
        <taxon>Brassicales</taxon>
        <taxon>Brassicaceae</taxon>
        <taxon>Camelineae</taxon>
        <taxon>Arabidopsis</taxon>
    </lineage>
</organism>
<comment type="function">
    <text evidence="2">Inorganic phosphate and probable anion transporter.</text>
</comment>
<comment type="subcellular location">
    <subcellularLocation>
        <location evidence="5">Plastid</location>
        <location evidence="5">Chloroplast membrane</location>
        <topology evidence="5">Multi-pass membrane protein</topology>
    </subcellularLocation>
</comment>
<comment type="alternative products">
    <event type="alternative splicing"/>
    <isoform>
        <id>Q66GI9-1</id>
        <name>1</name>
        <sequence type="displayed"/>
    </isoform>
    <isoform>
        <id>Q66GI9-2</id>
        <name>2</name>
        <sequence type="described" ref="VSP_033254 VSP_033255"/>
    </isoform>
    <isoform>
        <id>Q66GI9-3</id>
        <name>3</name>
        <sequence type="described" ref="VSP_041590"/>
    </isoform>
</comment>
<comment type="tissue specificity">
    <text evidence="2 3">Expressed in leaf veins and root tips.</text>
</comment>
<comment type="induction">
    <text evidence="3">Expressed with a circadian rhythm showing a peak during the middle of the day (under long day conditions).</text>
</comment>
<comment type="miscellaneous">
    <molecule>Isoform 3</molecule>
    <text evidence="5">Incomplete sequence.</text>
</comment>
<comment type="similarity">
    <text evidence="5">Belongs to the major facilitator superfamily. Sodium/anion cotransporter (TC 2.A.1.14) family.</text>
</comment>
<comment type="sequence caution" evidence="5">
    <conflict type="erroneous initiation">
        <sequence resource="EMBL-CDS" id="BAD94691"/>
    </conflict>
    <text>Truncated N-terminus.</text>
</comment>
<comment type="sequence caution" evidence="5">
    <conflict type="erroneous gene model prediction">
        <sequence resource="EMBL-CDS" id="CAB61944"/>
    </conflict>
</comment>
<gene>
    <name type="primary">ANTR4</name>
    <name type="synonym">PHT4;3</name>
    <name type="ordered locus">At3g46980</name>
    <name type="ORF">F13I12.30</name>
</gene>
<protein>
    <recommendedName>
        <fullName>Probable anion transporter 4, chloroplastic</fullName>
    </recommendedName>
    <alternativeName>
        <fullName>Phosphate transporter PHT4;3</fullName>
    </alternativeName>
</protein>
<keyword id="KW-0025">Alternative splicing</keyword>
<keyword id="KW-0150">Chloroplast</keyword>
<keyword id="KW-0472">Membrane</keyword>
<keyword id="KW-0934">Plastid</keyword>
<keyword id="KW-1185">Reference proteome</keyword>
<keyword id="KW-0809">Transit peptide</keyword>
<keyword id="KW-0812">Transmembrane</keyword>
<keyword id="KW-1133">Transmembrane helix</keyword>